<proteinExistence type="inferred from homology"/>
<feature type="chain" id="PRO_0000111910" description="Protein-L-isoaspartate O-methyltransferase">
    <location>
        <begin position="1"/>
        <end position="208"/>
    </location>
</feature>
<feature type="active site" evidence="1">
    <location>
        <position position="59"/>
    </location>
</feature>
<accession>Q8ZBQ0</accession>
<accession>Q0WBT8</accession>
<protein>
    <recommendedName>
        <fullName evidence="1">Protein-L-isoaspartate O-methyltransferase</fullName>
        <ecNumber evidence="1">2.1.1.77</ecNumber>
    </recommendedName>
    <alternativeName>
        <fullName evidence="1">L-isoaspartyl protein carboxyl methyltransferase</fullName>
    </alternativeName>
    <alternativeName>
        <fullName evidence="1">Protein L-isoaspartyl methyltransferase</fullName>
    </alternativeName>
    <alternativeName>
        <fullName evidence="1">Protein-beta-aspartate methyltransferase</fullName>
        <shortName evidence="1">PIMT</shortName>
    </alternativeName>
</protein>
<comment type="function">
    <text evidence="1">Catalyzes the methyl esterification of L-isoaspartyl residues in peptides and proteins that result from spontaneous decomposition of normal L-aspartyl and L-asparaginyl residues. It plays a role in the repair and/or degradation of damaged proteins.</text>
</comment>
<comment type="catalytic activity">
    <reaction evidence="1">
        <text>[protein]-L-isoaspartate + S-adenosyl-L-methionine = [protein]-L-isoaspartate alpha-methyl ester + S-adenosyl-L-homocysteine</text>
        <dbReference type="Rhea" id="RHEA:12705"/>
        <dbReference type="Rhea" id="RHEA-COMP:12143"/>
        <dbReference type="Rhea" id="RHEA-COMP:12144"/>
        <dbReference type="ChEBI" id="CHEBI:57856"/>
        <dbReference type="ChEBI" id="CHEBI:59789"/>
        <dbReference type="ChEBI" id="CHEBI:90596"/>
        <dbReference type="ChEBI" id="CHEBI:90598"/>
        <dbReference type="EC" id="2.1.1.77"/>
    </reaction>
</comment>
<comment type="subcellular location">
    <subcellularLocation>
        <location evidence="1">Cytoplasm</location>
    </subcellularLocation>
</comment>
<comment type="similarity">
    <text evidence="1">Belongs to the methyltransferase superfamily. L-isoaspartyl/D-aspartyl protein methyltransferase family.</text>
</comment>
<gene>
    <name evidence="1" type="primary">pcm</name>
    <name type="ordered locus">YPO3357</name>
    <name type="ordered locus">y0832</name>
    <name type="ordered locus">YP_0330</name>
</gene>
<organism>
    <name type="scientific">Yersinia pestis</name>
    <dbReference type="NCBI Taxonomy" id="632"/>
    <lineage>
        <taxon>Bacteria</taxon>
        <taxon>Pseudomonadati</taxon>
        <taxon>Pseudomonadota</taxon>
        <taxon>Gammaproteobacteria</taxon>
        <taxon>Enterobacterales</taxon>
        <taxon>Yersiniaceae</taxon>
        <taxon>Yersinia</taxon>
    </lineage>
</organism>
<evidence type="ECO:0000255" key="1">
    <source>
        <dbReference type="HAMAP-Rule" id="MF_00090"/>
    </source>
</evidence>
<name>PIMT_YERPE</name>
<dbReference type="EC" id="2.1.1.77" evidence="1"/>
<dbReference type="EMBL" id="AL590842">
    <property type="protein sequence ID" value="CAL21946.1"/>
    <property type="molecule type" value="Genomic_DNA"/>
</dbReference>
<dbReference type="EMBL" id="AE009952">
    <property type="protein sequence ID" value="AAM84417.1"/>
    <property type="molecule type" value="Genomic_DNA"/>
</dbReference>
<dbReference type="EMBL" id="AE017042">
    <property type="protein sequence ID" value="AAS60603.1"/>
    <property type="molecule type" value="Genomic_DNA"/>
</dbReference>
<dbReference type="PIR" id="AG0407">
    <property type="entry name" value="AG0407"/>
</dbReference>
<dbReference type="RefSeq" id="WP_002209395.1">
    <property type="nucleotide sequence ID" value="NZ_WUCM01000008.1"/>
</dbReference>
<dbReference type="RefSeq" id="YP_002348250.1">
    <property type="nucleotide sequence ID" value="NC_003143.1"/>
</dbReference>
<dbReference type="SMR" id="Q8ZBQ0"/>
<dbReference type="STRING" id="214092.YPO3357"/>
<dbReference type="PaxDb" id="214092-YPO3357"/>
<dbReference type="DNASU" id="1145779"/>
<dbReference type="EnsemblBacteria" id="AAS60603">
    <property type="protein sequence ID" value="AAS60603"/>
    <property type="gene ID" value="YP_0330"/>
</dbReference>
<dbReference type="KEGG" id="ype:YPO3357"/>
<dbReference type="KEGG" id="ypk:y0832"/>
<dbReference type="KEGG" id="ypm:YP_0330"/>
<dbReference type="PATRIC" id="fig|214092.21.peg.3834"/>
<dbReference type="eggNOG" id="COG2518">
    <property type="taxonomic scope" value="Bacteria"/>
</dbReference>
<dbReference type="HOGENOM" id="CLU_055432_2_0_6"/>
<dbReference type="OMA" id="HMHASAC"/>
<dbReference type="OrthoDB" id="9810066at2"/>
<dbReference type="Proteomes" id="UP000000815">
    <property type="component" value="Chromosome"/>
</dbReference>
<dbReference type="Proteomes" id="UP000001019">
    <property type="component" value="Chromosome"/>
</dbReference>
<dbReference type="Proteomes" id="UP000002490">
    <property type="component" value="Chromosome"/>
</dbReference>
<dbReference type="GO" id="GO:0005737">
    <property type="term" value="C:cytoplasm"/>
    <property type="evidence" value="ECO:0000318"/>
    <property type="project" value="GO_Central"/>
</dbReference>
<dbReference type="GO" id="GO:0004719">
    <property type="term" value="F:protein-L-isoaspartate (D-aspartate) O-methyltransferase activity"/>
    <property type="evidence" value="ECO:0000318"/>
    <property type="project" value="GO_Central"/>
</dbReference>
<dbReference type="GO" id="GO:0032259">
    <property type="term" value="P:methylation"/>
    <property type="evidence" value="ECO:0007669"/>
    <property type="project" value="UniProtKB-KW"/>
</dbReference>
<dbReference type="GO" id="GO:0036211">
    <property type="term" value="P:protein modification process"/>
    <property type="evidence" value="ECO:0007669"/>
    <property type="project" value="UniProtKB-UniRule"/>
</dbReference>
<dbReference type="GO" id="GO:0030091">
    <property type="term" value="P:protein repair"/>
    <property type="evidence" value="ECO:0007669"/>
    <property type="project" value="UniProtKB-UniRule"/>
</dbReference>
<dbReference type="CDD" id="cd02440">
    <property type="entry name" value="AdoMet_MTases"/>
    <property type="match status" value="1"/>
</dbReference>
<dbReference type="FunFam" id="3.40.50.150:FF:000010">
    <property type="entry name" value="Protein-L-isoaspartate O-methyltransferase"/>
    <property type="match status" value="1"/>
</dbReference>
<dbReference type="Gene3D" id="3.40.50.150">
    <property type="entry name" value="Vaccinia Virus protein VP39"/>
    <property type="match status" value="1"/>
</dbReference>
<dbReference type="HAMAP" id="MF_00090">
    <property type="entry name" value="PIMT"/>
    <property type="match status" value="1"/>
</dbReference>
<dbReference type="InterPro" id="IPR000682">
    <property type="entry name" value="PCMT"/>
</dbReference>
<dbReference type="InterPro" id="IPR029063">
    <property type="entry name" value="SAM-dependent_MTases_sf"/>
</dbReference>
<dbReference type="NCBIfam" id="TIGR00080">
    <property type="entry name" value="pimt"/>
    <property type="match status" value="1"/>
</dbReference>
<dbReference type="NCBIfam" id="NF001453">
    <property type="entry name" value="PRK00312.1"/>
    <property type="match status" value="1"/>
</dbReference>
<dbReference type="PANTHER" id="PTHR11579">
    <property type="entry name" value="PROTEIN-L-ISOASPARTATE O-METHYLTRANSFERASE"/>
    <property type="match status" value="1"/>
</dbReference>
<dbReference type="PANTHER" id="PTHR11579:SF0">
    <property type="entry name" value="PROTEIN-L-ISOASPARTATE(D-ASPARTATE) O-METHYLTRANSFERASE"/>
    <property type="match status" value="1"/>
</dbReference>
<dbReference type="Pfam" id="PF01135">
    <property type="entry name" value="PCMT"/>
    <property type="match status" value="1"/>
</dbReference>
<dbReference type="SUPFAM" id="SSF53335">
    <property type="entry name" value="S-adenosyl-L-methionine-dependent methyltransferases"/>
    <property type="match status" value="1"/>
</dbReference>
<dbReference type="PROSITE" id="PS01279">
    <property type="entry name" value="PCMT"/>
    <property type="match status" value="1"/>
</dbReference>
<reference key="1">
    <citation type="journal article" date="2001" name="Nature">
        <title>Genome sequence of Yersinia pestis, the causative agent of plague.</title>
        <authorList>
            <person name="Parkhill J."/>
            <person name="Wren B.W."/>
            <person name="Thomson N.R."/>
            <person name="Titball R.W."/>
            <person name="Holden M.T.G."/>
            <person name="Prentice M.B."/>
            <person name="Sebaihia M."/>
            <person name="James K.D."/>
            <person name="Churcher C.M."/>
            <person name="Mungall K.L."/>
            <person name="Baker S."/>
            <person name="Basham D."/>
            <person name="Bentley S.D."/>
            <person name="Brooks K."/>
            <person name="Cerdeno-Tarraga A.-M."/>
            <person name="Chillingworth T."/>
            <person name="Cronin A."/>
            <person name="Davies R.M."/>
            <person name="Davis P."/>
            <person name="Dougan G."/>
            <person name="Feltwell T."/>
            <person name="Hamlin N."/>
            <person name="Holroyd S."/>
            <person name="Jagels K."/>
            <person name="Karlyshev A.V."/>
            <person name="Leather S."/>
            <person name="Moule S."/>
            <person name="Oyston P.C.F."/>
            <person name="Quail M.A."/>
            <person name="Rutherford K.M."/>
            <person name="Simmonds M."/>
            <person name="Skelton J."/>
            <person name="Stevens K."/>
            <person name="Whitehead S."/>
            <person name="Barrell B.G."/>
        </authorList>
    </citation>
    <scope>NUCLEOTIDE SEQUENCE [LARGE SCALE GENOMIC DNA]</scope>
    <source>
        <strain>CO-92 / Biovar Orientalis</strain>
    </source>
</reference>
<reference key="2">
    <citation type="journal article" date="2002" name="J. Bacteriol.">
        <title>Genome sequence of Yersinia pestis KIM.</title>
        <authorList>
            <person name="Deng W."/>
            <person name="Burland V."/>
            <person name="Plunkett G. III"/>
            <person name="Boutin A."/>
            <person name="Mayhew G.F."/>
            <person name="Liss P."/>
            <person name="Perna N.T."/>
            <person name="Rose D.J."/>
            <person name="Mau B."/>
            <person name="Zhou S."/>
            <person name="Schwartz D.C."/>
            <person name="Fetherston J.D."/>
            <person name="Lindler L.E."/>
            <person name="Brubaker R.R."/>
            <person name="Plano G.V."/>
            <person name="Straley S.C."/>
            <person name="McDonough K.A."/>
            <person name="Nilles M.L."/>
            <person name="Matson J.S."/>
            <person name="Blattner F.R."/>
            <person name="Perry R.D."/>
        </authorList>
    </citation>
    <scope>NUCLEOTIDE SEQUENCE [LARGE SCALE GENOMIC DNA]</scope>
    <source>
        <strain>KIM10+ / Biovar Mediaevalis</strain>
    </source>
</reference>
<reference key="3">
    <citation type="journal article" date="2004" name="DNA Res.">
        <title>Complete genome sequence of Yersinia pestis strain 91001, an isolate avirulent to humans.</title>
        <authorList>
            <person name="Song Y."/>
            <person name="Tong Z."/>
            <person name="Wang J."/>
            <person name="Wang L."/>
            <person name="Guo Z."/>
            <person name="Han Y."/>
            <person name="Zhang J."/>
            <person name="Pei D."/>
            <person name="Zhou D."/>
            <person name="Qin H."/>
            <person name="Pang X."/>
            <person name="Han Y."/>
            <person name="Zhai J."/>
            <person name="Li M."/>
            <person name="Cui B."/>
            <person name="Qi Z."/>
            <person name="Jin L."/>
            <person name="Dai R."/>
            <person name="Chen F."/>
            <person name="Li S."/>
            <person name="Ye C."/>
            <person name="Du Z."/>
            <person name="Lin W."/>
            <person name="Wang J."/>
            <person name="Yu J."/>
            <person name="Yang H."/>
            <person name="Wang J."/>
            <person name="Huang P."/>
            <person name="Yang R."/>
        </authorList>
    </citation>
    <scope>NUCLEOTIDE SEQUENCE [LARGE SCALE GENOMIC DNA]</scope>
    <source>
        <strain>91001 / Biovar Mediaevalis</strain>
    </source>
</reference>
<sequence>MVNKRMQTLLMQLRQQGIHDERLLQAIEAVPRERFVDEALAHKAYENTALPIGAGQTISQPYMVARMTELLQLTPTSRVLEIGTGSGYQTAILAHLVDHVCSVERIKGLQWQAKRRLKQLDLHNVSTRHGDGWLGWQSRGPFDAIIVTAAPPEIPDALLEQLDEGGILVLPVGEQFQTLKYVQRRNNEYHIETVEAVRFVPLVKGELA</sequence>
<keyword id="KW-0963">Cytoplasm</keyword>
<keyword id="KW-0489">Methyltransferase</keyword>
<keyword id="KW-1185">Reference proteome</keyword>
<keyword id="KW-0949">S-adenosyl-L-methionine</keyword>
<keyword id="KW-0808">Transferase</keyword>